<evidence type="ECO:0000250" key="1"/>
<evidence type="ECO:0000255" key="2">
    <source>
        <dbReference type="PROSITE-ProRule" id="PRU10007"/>
    </source>
</evidence>
<evidence type="ECO:0000305" key="3"/>
<comment type="function">
    <text evidence="1">Involved in F420 biosynthesis through the oxidation of lactaldehyde to lactate.</text>
</comment>
<comment type="catalytic activity">
    <reaction>
        <text>(S)-lactaldehyde + NAD(+) + H2O = (S)-lactate + NADH + 2 H(+)</text>
        <dbReference type="Rhea" id="RHEA:14277"/>
        <dbReference type="ChEBI" id="CHEBI:15377"/>
        <dbReference type="ChEBI" id="CHEBI:15378"/>
        <dbReference type="ChEBI" id="CHEBI:16651"/>
        <dbReference type="ChEBI" id="CHEBI:18041"/>
        <dbReference type="ChEBI" id="CHEBI:57540"/>
        <dbReference type="ChEBI" id="CHEBI:57945"/>
        <dbReference type="EC" id="1.2.1.22"/>
    </reaction>
</comment>
<comment type="pathway">
    <text>Cofactor biosynthesis; coenzyme F420 biosynthesis.</text>
</comment>
<comment type="subunit">
    <text evidence="1">Homotetramer.</text>
</comment>
<comment type="similarity">
    <text evidence="3">Belongs to the aldehyde dehydrogenase family.</text>
</comment>
<keyword id="KW-0520">NAD</keyword>
<keyword id="KW-0560">Oxidoreductase</keyword>
<keyword id="KW-1185">Reference proteome</keyword>
<proteinExistence type="inferred from homology"/>
<dbReference type="EC" id="1.2.1.22"/>
<dbReference type="EMBL" id="BX950229">
    <property type="protein sequence ID" value="CAF31043.1"/>
    <property type="molecule type" value="Genomic_DNA"/>
</dbReference>
<dbReference type="RefSeq" id="WP_011171431.1">
    <property type="nucleotide sequence ID" value="NC_005791.1"/>
</dbReference>
<dbReference type="SMR" id="Q6LX65"/>
<dbReference type="STRING" id="267377.MMP1487"/>
<dbReference type="EnsemblBacteria" id="CAF31043">
    <property type="protein sequence ID" value="CAF31043"/>
    <property type="gene ID" value="MMP1487"/>
</dbReference>
<dbReference type="GeneID" id="2762736"/>
<dbReference type="KEGG" id="mmp:MMP1487"/>
<dbReference type="PATRIC" id="fig|267377.15.peg.1523"/>
<dbReference type="eggNOG" id="arCOG01252">
    <property type="taxonomic scope" value="Archaea"/>
</dbReference>
<dbReference type="HOGENOM" id="CLU_005391_1_0_2"/>
<dbReference type="OrthoDB" id="6342at2157"/>
<dbReference type="UniPathway" id="UPA00071"/>
<dbReference type="Proteomes" id="UP000000590">
    <property type="component" value="Chromosome"/>
</dbReference>
<dbReference type="GO" id="GO:0008911">
    <property type="term" value="F:lactaldehyde dehydrogenase (NAD+) activity"/>
    <property type="evidence" value="ECO:0007669"/>
    <property type="project" value="UniProtKB-EC"/>
</dbReference>
<dbReference type="FunFam" id="3.40.605.10:FF:000007">
    <property type="entry name" value="NAD/NADP-dependent betaine aldehyde dehydrogenase"/>
    <property type="match status" value="1"/>
</dbReference>
<dbReference type="Gene3D" id="3.40.605.10">
    <property type="entry name" value="Aldehyde Dehydrogenase, Chain A, domain 1"/>
    <property type="match status" value="1"/>
</dbReference>
<dbReference type="Gene3D" id="3.40.309.10">
    <property type="entry name" value="Aldehyde Dehydrogenase, Chain A, domain 2"/>
    <property type="match status" value="1"/>
</dbReference>
<dbReference type="InterPro" id="IPR016161">
    <property type="entry name" value="Ald_DH/histidinol_DH"/>
</dbReference>
<dbReference type="InterPro" id="IPR016163">
    <property type="entry name" value="Ald_DH_C"/>
</dbReference>
<dbReference type="InterPro" id="IPR029510">
    <property type="entry name" value="Ald_DH_CS_GLU"/>
</dbReference>
<dbReference type="InterPro" id="IPR016162">
    <property type="entry name" value="Ald_DH_N"/>
</dbReference>
<dbReference type="InterPro" id="IPR015590">
    <property type="entry name" value="Aldehyde_DH_dom"/>
</dbReference>
<dbReference type="InterPro" id="IPR051020">
    <property type="entry name" value="ALDH-related_metabolic_enz"/>
</dbReference>
<dbReference type="InterPro" id="IPR053404">
    <property type="entry name" value="Lactaldehyde_DH"/>
</dbReference>
<dbReference type="NCBIfam" id="NF040648">
    <property type="entry name" value="lactal_redase_Meth"/>
    <property type="match status" value="1"/>
</dbReference>
<dbReference type="PANTHER" id="PTHR42991">
    <property type="entry name" value="ALDEHYDE DEHYDROGENASE"/>
    <property type="match status" value="1"/>
</dbReference>
<dbReference type="PANTHER" id="PTHR42991:SF1">
    <property type="entry name" value="ALDEHYDE DEHYDROGENASE"/>
    <property type="match status" value="1"/>
</dbReference>
<dbReference type="Pfam" id="PF00171">
    <property type="entry name" value="Aldedh"/>
    <property type="match status" value="1"/>
</dbReference>
<dbReference type="SUPFAM" id="SSF53720">
    <property type="entry name" value="ALDH-like"/>
    <property type="match status" value="1"/>
</dbReference>
<dbReference type="PROSITE" id="PS00687">
    <property type="entry name" value="ALDEHYDE_DEHYDR_GLU"/>
    <property type="match status" value="1"/>
</dbReference>
<protein>
    <recommendedName>
        <fullName>Lactaldehyde dehydrogenase</fullName>
        <ecNumber>1.2.1.22</ecNumber>
    </recommendedName>
</protein>
<gene>
    <name type="ordered locus">MMP1487</name>
</gene>
<sequence length="465" mass="50981">MFIDGKWIIREDIDVFDPYTLENIEKITALDREETKNAIEVTEKHKEIMKNLSPSKRYKILMKVAEHLSSKKDFFAKTISIDVGKPIKQSKIEVDRTLTALKLSAFYAKELRGETINSENGLIFTKKEPLGVIGAITPFNFPLNLATHKIGPAIATGNSVVLHPSSKAPIVAIYLTKIIEHVLKQMDIPRGVFNLATGNGEIVGDEISKNDNVNMVSFTGSVEVGESISKNAKMKKVTLELGGNNPMIVLKDSDIKLAAKSAVKSKFLNAGQVCISVGQVLVEEEVVETFTKYVIEETKKLILGNPLDKNTDIGPLISPESALRIENLIKQSVSEGGELLIGGNRQNSLISPAVINIDEENILSKIETFGPILPILTVKDSEEAVNIANNSKYGLQAGLFTNNINNAMKIADELEYGGIMINSSPTFRKDNMPFGGVKKSGLGREGIKYTVEEMSETKTVVIHNI</sequence>
<reference key="1">
    <citation type="journal article" date="2004" name="J. Bacteriol.">
        <title>Complete genome sequence of the genetically tractable hydrogenotrophic methanogen Methanococcus maripaludis.</title>
        <authorList>
            <person name="Hendrickson E.L."/>
            <person name="Kaul R."/>
            <person name="Zhou Y."/>
            <person name="Bovee D."/>
            <person name="Chapman P."/>
            <person name="Chung J."/>
            <person name="Conway de Macario E."/>
            <person name="Dodsworth J.A."/>
            <person name="Gillett W."/>
            <person name="Graham D.E."/>
            <person name="Hackett M."/>
            <person name="Haydock A.K."/>
            <person name="Kang A."/>
            <person name="Land M.L."/>
            <person name="Levy R."/>
            <person name="Lie T.J."/>
            <person name="Major T.A."/>
            <person name="Moore B.C."/>
            <person name="Porat I."/>
            <person name="Palmeiri A."/>
            <person name="Rouse G."/>
            <person name="Saenphimmachak C."/>
            <person name="Soell D."/>
            <person name="Van Dien S."/>
            <person name="Wang T."/>
            <person name="Whitman W.B."/>
            <person name="Xia Q."/>
            <person name="Zhang Y."/>
            <person name="Larimer F.W."/>
            <person name="Olson M.V."/>
            <person name="Leigh J.A."/>
        </authorList>
    </citation>
    <scope>NUCLEOTIDE SEQUENCE [LARGE SCALE GENOMIC DNA]</scope>
    <source>
        <strain>DSM 14266 / JCM 13030 / NBRC 101832 / S2 / LL</strain>
    </source>
</reference>
<name>LADH_METMP</name>
<accession>Q6LX65</accession>
<organism>
    <name type="scientific">Methanococcus maripaludis (strain DSM 14266 / JCM 13030 / NBRC 101832 / S2 / LL)</name>
    <dbReference type="NCBI Taxonomy" id="267377"/>
    <lineage>
        <taxon>Archaea</taxon>
        <taxon>Methanobacteriati</taxon>
        <taxon>Methanobacteriota</taxon>
        <taxon>Methanomada group</taxon>
        <taxon>Methanococci</taxon>
        <taxon>Methanococcales</taxon>
        <taxon>Methanococcaceae</taxon>
        <taxon>Methanococcus</taxon>
    </lineage>
</organism>
<feature type="chain" id="PRO_0000342592" description="Lactaldehyde dehydrogenase">
    <location>
        <begin position="1"/>
        <end position="465"/>
    </location>
</feature>
<feature type="active site" evidence="2">
    <location>
        <position position="240"/>
    </location>
</feature>
<feature type="active site" evidence="2">
    <location>
        <position position="274"/>
    </location>
</feature>
<feature type="binding site" evidence="1">
    <location>
        <begin position="220"/>
        <end position="225"/>
    </location>
    <ligand>
        <name>NAD(+)</name>
        <dbReference type="ChEBI" id="CHEBI:57540"/>
    </ligand>
</feature>